<name>YNL4_YEAST</name>
<reference key="1">
    <citation type="journal article" date="1997" name="Yeast">
        <title>The DNA sequence of cosmid 14-13b from chromosome XIV of Saccharomyces cerevisiae reveals an unusually high number of overlapping open reading frames.</title>
        <authorList>
            <person name="de Antoni A."/>
            <person name="D'Angelo M."/>
            <person name="Dal Pero F."/>
            <person name="Sartorello F."/>
            <person name="Pandolfo D."/>
            <person name="Pallavicini A."/>
            <person name="Lanfranchi G."/>
            <person name="Valle G."/>
        </authorList>
    </citation>
    <scope>NUCLEOTIDE SEQUENCE [GENOMIC DNA]</scope>
</reference>
<reference key="2">
    <citation type="journal article" date="1997" name="Nature">
        <title>The nucleotide sequence of Saccharomyces cerevisiae chromosome XIV and its evolutionary implications.</title>
        <authorList>
            <person name="Philippsen P."/>
            <person name="Kleine K."/>
            <person name="Poehlmann R."/>
            <person name="Duesterhoeft A."/>
            <person name="Hamberg K."/>
            <person name="Hegemann J.H."/>
            <person name="Obermaier B."/>
            <person name="Urrestarazu L.A."/>
            <person name="Aert R."/>
            <person name="Albermann K."/>
            <person name="Altmann R."/>
            <person name="Andre B."/>
            <person name="Baladron V."/>
            <person name="Ballesta J.P.G."/>
            <person name="Becam A.-M."/>
            <person name="Beinhauer J.D."/>
            <person name="Boskovic J."/>
            <person name="Buitrago M.J."/>
            <person name="Bussereau F."/>
            <person name="Coster F."/>
            <person name="Crouzet M."/>
            <person name="D'Angelo M."/>
            <person name="Dal Pero F."/>
            <person name="De Antoni A."/>
            <person name="del Rey F."/>
            <person name="Doignon F."/>
            <person name="Domdey H."/>
            <person name="Dubois E."/>
            <person name="Fiedler T.A."/>
            <person name="Fleig U."/>
            <person name="Floeth M."/>
            <person name="Fritz C."/>
            <person name="Gaillardin C."/>
            <person name="Garcia-Cantalejo J.M."/>
            <person name="Glansdorff N."/>
            <person name="Goffeau A."/>
            <person name="Gueldener U."/>
            <person name="Herbert C.J."/>
            <person name="Heumann K."/>
            <person name="Heuss-Neitzel D."/>
            <person name="Hilbert H."/>
            <person name="Hinni K."/>
            <person name="Iraqui Houssaini I."/>
            <person name="Jacquet M."/>
            <person name="Jimenez A."/>
            <person name="Jonniaux J.-L."/>
            <person name="Karpfinger-Hartl L."/>
            <person name="Lanfranchi G."/>
            <person name="Lepingle A."/>
            <person name="Levesque H."/>
            <person name="Lyck R."/>
            <person name="Maftahi M."/>
            <person name="Mallet L."/>
            <person name="Maurer C.T.C."/>
            <person name="Messenguy F."/>
            <person name="Mewes H.-W."/>
            <person name="Moestl D."/>
            <person name="Nasr F."/>
            <person name="Nicaud J.-M."/>
            <person name="Niedenthal R.K."/>
            <person name="Pandolfo D."/>
            <person name="Pierard A."/>
            <person name="Piravandi E."/>
            <person name="Planta R.J."/>
            <person name="Pohl T.M."/>
            <person name="Purnelle B."/>
            <person name="Rebischung C."/>
            <person name="Remacha M.A."/>
            <person name="Revuelta J.L."/>
            <person name="Rinke M."/>
            <person name="Saiz J.E."/>
            <person name="Sartorello F."/>
            <person name="Scherens B."/>
            <person name="Sen-Gupta M."/>
            <person name="Soler-Mira A."/>
            <person name="Urbanus J.H.M."/>
            <person name="Valle G."/>
            <person name="Van Dyck L."/>
            <person name="Verhasselt P."/>
            <person name="Vierendeels F."/>
            <person name="Vissers S."/>
            <person name="Voet M."/>
            <person name="Volckaert G."/>
            <person name="Wach A."/>
            <person name="Wambutt R."/>
            <person name="Wedler H."/>
            <person name="Zollner A."/>
            <person name="Hani J."/>
        </authorList>
    </citation>
    <scope>NUCLEOTIDE SEQUENCE [LARGE SCALE GENOMIC DNA]</scope>
    <source>
        <strain>ATCC 204508 / S288c</strain>
    </source>
</reference>
<reference key="3">
    <citation type="journal article" date="2014" name="G3 (Bethesda)">
        <title>The reference genome sequence of Saccharomyces cerevisiae: Then and now.</title>
        <authorList>
            <person name="Engel S.R."/>
            <person name="Dietrich F.S."/>
            <person name="Fisk D.G."/>
            <person name="Binkley G."/>
            <person name="Balakrishnan R."/>
            <person name="Costanzo M.C."/>
            <person name="Dwight S.S."/>
            <person name="Hitz B.C."/>
            <person name="Karra K."/>
            <person name="Nash R.S."/>
            <person name="Weng S."/>
            <person name="Wong E.D."/>
            <person name="Lloyd P."/>
            <person name="Skrzypek M.S."/>
            <person name="Miyasato S.R."/>
            <person name="Simison M."/>
            <person name="Cherry J.M."/>
        </authorList>
    </citation>
    <scope>GENOME REANNOTATION</scope>
    <source>
        <strain>ATCC 204508 / S288c</strain>
    </source>
</reference>
<proteinExistence type="uncertain"/>
<protein>
    <recommendedName>
        <fullName>Putative uncharacterized protein YNL114C</fullName>
    </recommendedName>
</protein>
<evidence type="ECO:0000255" key="1"/>
<evidence type="ECO:0000305" key="2"/>
<evidence type="ECO:0000305" key="3">
    <source>
    </source>
</evidence>
<sequence>MRYRVTTKFYVWIFHYNVTKGISKRVILLYNLKRGTSSIFRCCLCEKLNFFPVWFLFLFFIASHINILFFFFLDVLWFLWCYLCSGLFLFDVFSHLPGTLCEVQFFRLWIDGLSPIRYFIPQH</sequence>
<comment type="subcellular location">
    <subcellularLocation>
        <location evidence="2">Membrane</location>
        <topology evidence="2">Multi-pass membrane protein</topology>
    </subcellularLocation>
</comment>
<comment type="miscellaneous">
    <text evidence="2">Partially overlaps RPC19.</text>
</comment>
<comment type="caution">
    <text evidence="3">Product of a dubious gene prediction unlikely to encode a functional protein. Because of that it is not part of the S.cerevisiae S288c complete/reference proteome set.</text>
</comment>
<feature type="chain" id="PRO_0000203434" description="Putative uncharacterized protein YNL114C">
    <location>
        <begin position="1"/>
        <end position="123"/>
    </location>
</feature>
<feature type="transmembrane region" description="Helical" evidence="1">
    <location>
        <begin position="53"/>
        <end position="73"/>
    </location>
</feature>
<feature type="transmembrane region" description="Helical" evidence="1">
    <location>
        <begin position="75"/>
        <end position="95"/>
    </location>
</feature>
<accession>P53926</accession>
<dbReference type="EMBL" id="Z69382">
    <property type="protein sequence ID" value="CAA93393.1"/>
    <property type="molecule type" value="Genomic_DNA"/>
</dbReference>
<dbReference type="EMBL" id="Z71390">
    <property type="protein sequence ID" value="CAA95993.1"/>
    <property type="molecule type" value="Genomic_DNA"/>
</dbReference>
<dbReference type="PIR" id="S63055">
    <property type="entry name" value="S63055"/>
</dbReference>
<dbReference type="SMR" id="P53926"/>
<dbReference type="STRING" id="4932.YNL114C"/>
<dbReference type="PaxDb" id="4932-YNL114C"/>
<dbReference type="EnsemblFungi" id="YNL114C_mRNA">
    <property type="protein sequence ID" value="YNL114C"/>
    <property type="gene ID" value="YNL114C"/>
</dbReference>
<dbReference type="AGR" id="SGD:S000005058"/>
<dbReference type="SGD" id="S000005058">
    <property type="gene designation" value="YNL114C"/>
</dbReference>
<dbReference type="HOGENOM" id="CLU_2016998_0_0_1"/>
<dbReference type="GO" id="GO:0016020">
    <property type="term" value="C:membrane"/>
    <property type="evidence" value="ECO:0007669"/>
    <property type="project" value="UniProtKB-SubCell"/>
</dbReference>
<keyword id="KW-0472">Membrane</keyword>
<keyword id="KW-0812">Transmembrane</keyword>
<keyword id="KW-1133">Transmembrane helix</keyword>
<organism>
    <name type="scientific">Saccharomyces cerevisiae (strain ATCC 204508 / S288c)</name>
    <name type="common">Baker's yeast</name>
    <dbReference type="NCBI Taxonomy" id="559292"/>
    <lineage>
        <taxon>Eukaryota</taxon>
        <taxon>Fungi</taxon>
        <taxon>Dikarya</taxon>
        <taxon>Ascomycota</taxon>
        <taxon>Saccharomycotina</taxon>
        <taxon>Saccharomycetes</taxon>
        <taxon>Saccharomycetales</taxon>
        <taxon>Saccharomycetaceae</taxon>
        <taxon>Saccharomyces</taxon>
    </lineage>
</organism>
<gene>
    <name type="ordered locus">YNL114C</name>
    <name type="ORF">N1934</name>
</gene>